<organism>
    <name type="scientific">Aquifex aeolicus (strain VF5)</name>
    <dbReference type="NCBI Taxonomy" id="224324"/>
    <lineage>
        <taxon>Bacteria</taxon>
        <taxon>Pseudomonadati</taxon>
        <taxon>Aquificota</taxon>
        <taxon>Aquificia</taxon>
        <taxon>Aquificales</taxon>
        <taxon>Aquificaceae</taxon>
        <taxon>Aquifex</taxon>
    </lineage>
</organism>
<comment type="catalytic activity">
    <reaction>
        <text>tRNA(Phe) + L-phenylalanine + ATP = L-phenylalanyl-tRNA(Phe) + AMP + diphosphate + H(+)</text>
        <dbReference type="Rhea" id="RHEA:19413"/>
        <dbReference type="Rhea" id="RHEA-COMP:9668"/>
        <dbReference type="Rhea" id="RHEA-COMP:9699"/>
        <dbReference type="ChEBI" id="CHEBI:15378"/>
        <dbReference type="ChEBI" id="CHEBI:30616"/>
        <dbReference type="ChEBI" id="CHEBI:33019"/>
        <dbReference type="ChEBI" id="CHEBI:58095"/>
        <dbReference type="ChEBI" id="CHEBI:78442"/>
        <dbReference type="ChEBI" id="CHEBI:78531"/>
        <dbReference type="ChEBI" id="CHEBI:456215"/>
        <dbReference type="EC" id="6.1.1.20"/>
    </reaction>
</comment>
<comment type="cofactor">
    <cofactor evidence="1">
        <name>Mg(2+)</name>
        <dbReference type="ChEBI" id="CHEBI:18420"/>
    </cofactor>
    <text evidence="1">Binds 2 magnesium ions per tetramer.</text>
</comment>
<comment type="subunit">
    <text evidence="1">Tetramer of two alpha and two beta subunits.</text>
</comment>
<comment type="subcellular location">
    <subcellularLocation>
        <location evidence="1">Cytoplasm</location>
    </subcellularLocation>
</comment>
<comment type="similarity">
    <text evidence="2">Belongs to the class-II aminoacyl-tRNA synthetase family. Phe-tRNA synthetase alpha subunit type 1 subfamily.</text>
</comment>
<reference key="1">
    <citation type="journal article" date="1998" name="Nature">
        <title>The complete genome of the hyperthermophilic bacterium Aquifex aeolicus.</title>
        <authorList>
            <person name="Deckert G."/>
            <person name="Warren P.V."/>
            <person name="Gaasterland T."/>
            <person name="Young W.G."/>
            <person name="Lenox A.L."/>
            <person name="Graham D.E."/>
            <person name="Overbeek R."/>
            <person name="Snead M.A."/>
            <person name="Keller M."/>
            <person name="Aujay M."/>
            <person name="Huber R."/>
            <person name="Feldman R.A."/>
            <person name="Short J.M."/>
            <person name="Olsen G.J."/>
            <person name="Swanson R.V."/>
        </authorList>
    </citation>
    <scope>NUCLEOTIDE SEQUENCE [LARGE SCALE GENOMIC DNA]</scope>
    <source>
        <strain>VF5</strain>
    </source>
</reference>
<evidence type="ECO:0000250" key="1"/>
<evidence type="ECO:0000305" key="2"/>
<protein>
    <recommendedName>
        <fullName>Phenylalanine--tRNA ligase alpha subunit</fullName>
        <ecNumber>6.1.1.20</ecNumber>
    </recommendedName>
    <alternativeName>
        <fullName>Phenylalanyl-tRNA synthetase alpha subunit</fullName>
        <shortName>PheRS</shortName>
    </alternativeName>
</protein>
<proteinExistence type="inferred from homology"/>
<name>SYFA_AQUAE</name>
<keyword id="KW-0030">Aminoacyl-tRNA synthetase</keyword>
<keyword id="KW-0067">ATP-binding</keyword>
<keyword id="KW-0963">Cytoplasm</keyword>
<keyword id="KW-0436">Ligase</keyword>
<keyword id="KW-0460">Magnesium</keyword>
<keyword id="KW-0479">Metal-binding</keyword>
<keyword id="KW-0547">Nucleotide-binding</keyword>
<keyword id="KW-0648">Protein biosynthesis</keyword>
<keyword id="KW-1185">Reference proteome</keyword>
<accession>O67087</accession>
<gene>
    <name type="primary">pheS</name>
    <name type="ordered locus">aq_953</name>
</gene>
<dbReference type="EC" id="6.1.1.20"/>
<dbReference type="EMBL" id="AE000657">
    <property type="protein sequence ID" value="AAC07051.1"/>
    <property type="molecule type" value="Genomic_DNA"/>
</dbReference>
<dbReference type="PIR" id="D70382">
    <property type="entry name" value="D70382"/>
</dbReference>
<dbReference type="RefSeq" id="NP_213650.1">
    <property type="nucleotide sequence ID" value="NC_000918.1"/>
</dbReference>
<dbReference type="RefSeq" id="WP_010880588.1">
    <property type="nucleotide sequence ID" value="NC_000918.1"/>
</dbReference>
<dbReference type="SMR" id="O67087"/>
<dbReference type="FunCoup" id="O67087">
    <property type="interactions" value="437"/>
</dbReference>
<dbReference type="STRING" id="224324.aq_953"/>
<dbReference type="EnsemblBacteria" id="AAC07051">
    <property type="protein sequence ID" value="AAC07051"/>
    <property type="gene ID" value="aq_953"/>
</dbReference>
<dbReference type="KEGG" id="aae:aq_953"/>
<dbReference type="PATRIC" id="fig|224324.8.peg.748"/>
<dbReference type="eggNOG" id="COG0016">
    <property type="taxonomic scope" value="Bacteria"/>
</dbReference>
<dbReference type="HOGENOM" id="CLU_025086_0_1_0"/>
<dbReference type="InParanoid" id="O67087"/>
<dbReference type="OrthoDB" id="9800719at2"/>
<dbReference type="Proteomes" id="UP000000798">
    <property type="component" value="Chromosome"/>
</dbReference>
<dbReference type="GO" id="GO:0005737">
    <property type="term" value="C:cytoplasm"/>
    <property type="evidence" value="ECO:0000318"/>
    <property type="project" value="GO_Central"/>
</dbReference>
<dbReference type="GO" id="GO:0005524">
    <property type="term" value="F:ATP binding"/>
    <property type="evidence" value="ECO:0007669"/>
    <property type="project" value="UniProtKB-UniRule"/>
</dbReference>
<dbReference type="GO" id="GO:0000287">
    <property type="term" value="F:magnesium ion binding"/>
    <property type="evidence" value="ECO:0007669"/>
    <property type="project" value="UniProtKB-UniRule"/>
</dbReference>
<dbReference type="GO" id="GO:0004826">
    <property type="term" value="F:phenylalanine-tRNA ligase activity"/>
    <property type="evidence" value="ECO:0000318"/>
    <property type="project" value="GO_Central"/>
</dbReference>
<dbReference type="GO" id="GO:0000049">
    <property type="term" value="F:tRNA binding"/>
    <property type="evidence" value="ECO:0007669"/>
    <property type="project" value="InterPro"/>
</dbReference>
<dbReference type="GO" id="GO:0006432">
    <property type="term" value="P:phenylalanyl-tRNA aminoacylation"/>
    <property type="evidence" value="ECO:0000318"/>
    <property type="project" value="GO_Central"/>
</dbReference>
<dbReference type="CDD" id="cd00496">
    <property type="entry name" value="PheRS_alpha_core"/>
    <property type="match status" value="1"/>
</dbReference>
<dbReference type="FunFam" id="3.30.930.10:FF:000003">
    <property type="entry name" value="Phenylalanine--tRNA ligase alpha subunit"/>
    <property type="match status" value="1"/>
</dbReference>
<dbReference type="Gene3D" id="3.30.930.10">
    <property type="entry name" value="Bira Bifunctional Protein, Domain 2"/>
    <property type="match status" value="1"/>
</dbReference>
<dbReference type="HAMAP" id="MF_00281">
    <property type="entry name" value="Phe_tRNA_synth_alpha1"/>
    <property type="match status" value="1"/>
</dbReference>
<dbReference type="InterPro" id="IPR006195">
    <property type="entry name" value="aa-tRNA-synth_II"/>
</dbReference>
<dbReference type="InterPro" id="IPR045864">
    <property type="entry name" value="aa-tRNA-synth_II/BPL/LPL"/>
</dbReference>
<dbReference type="InterPro" id="IPR004529">
    <property type="entry name" value="Phe-tRNA-synth_IIc_asu"/>
</dbReference>
<dbReference type="InterPro" id="IPR004188">
    <property type="entry name" value="Phe-tRNA_ligase_II_N"/>
</dbReference>
<dbReference type="InterPro" id="IPR022911">
    <property type="entry name" value="Phe_tRNA_ligase_alpha1_bac"/>
</dbReference>
<dbReference type="InterPro" id="IPR002319">
    <property type="entry name" value="Phenylalanyl-tRNA_Synthase"/>
</dbReference>
<dbReference type="InterPro" id="IPR010978">
    <property type="entry name" value="tRNA-bd_arm"/>
</dbReference>
<dbReference type="NCBIfam" id="TIGR00468">
    <property type="entry name" value="pheS"/>
    <property type="match status" value="1"/>
</dbReference>
<dbReference type="PANTHER" id="PTHR11538:SF41">
    <property type="entry name" value="PHENYLALANINE--TRNA LIGASE, MITOCHONDRIAL"/>
    <property type="match status" value="1"/>
</dbReference>
<dbReference type="PANTHER" id="PTHR11538">
    <property type="entry name" value="PHENYLALANYL-TRNA SYNTHETASE"/>
    <property type="match status" value="1"/>
</dbReference>
<dbReference type="Pfam" id="PF02912">
    <property type="entry name" value="Phe_tRNA-synt_N"/>
    <property type="match status" value="1"/>
</dbReference>
<dbReference type="Pfam" id="PF01409">
    <property type="entry name" value="tRNA-synt_2d"/>
    <property type="match status" value="1"/>
</dbReference>
<dbReference type="SUPFAM" id="SSF55681">
    <property type="entry name" value="Class II aaRS and biotin synthetases"/>
    <property type="match status" value="1"/>
</dbReference>
<dbReference type="SUPFAM" id="SSF46589">
    <property type="entry name" value="tRNA-binding arm"/>
    <property type="match status" value="1"/>
</dbReference>
<dbReference type="PROSITE" id="PS50862">
    <property type="entry name" value="AA_TRNA_LIGASE_II"/>
    <property type="match status" value="1"/>
</dbReference>
<sequence>MEKLDKILEELKLLLSSVSSLKELQEVRSKFLGSKGVIKELLKKIKEVPSEERKEYGKRVNLLKEEAEKLIKEKEEELKERELEEKLKGEWVDLSIPPARTVGSLHPITVTLERIVTIFRGMGFEVEEGPEVEREEYNFDMLNIPKEHPARDMQDTFYVNREGYLLRTHTSPVQIRTMLKKKPPIQIIAPGKVYRRDDDPTHSPMFHQVEGLVVNEYANFRHMKYVIEEFLKKFFETDLPVRFRTSYFPFTEPSAEVDIGCVICHQEGCRVCKHTGWLEVMGCGMVHPKVLENCGIDTDFYQGFAFGMGVERLAMLLFGIDNIKLFYENDLRFIKQFF</sequence>
<feature type="chain" id="PRO_0000126657" description="Phenylalanine--tRNA ligase alpha subunit">
    <location>
        <begin position="1"/>
        <end position="338"/>
    </location>
</feature>
<feature type="binding site" evidence="1">
    <location>
        <position position="252"/>
    </location>
    <ligand>
        <name>Mg(2+)</name>
        <dbReference type="ChEBI" id="CHEBI:18420"/>
        <note>shared with beta subunit</note>
    </ligand>
</feature>